<accession>P0DMB2</accession>
<proteinExistence type="evidence at protein level"/>
<keyword id="KW-1267">Proteomics identification</keyword>
<keyword id="KW-1185">Reference proteome</keyword>
<name>CH088_HUMAN</name>
<protein>
    <recommendedName>
        <fullName>Uncharacterized protein C8orf88</fullName>
    </recommendedName>
</protein>
<reference key="1">
    <citation type="journal article" date="2006" name="Physiol. Genomics">
        <title>Genomic annotation of 15,809 ESTs identified from pooled early gestation human eyes.</title>
        <authorList>
            <person name="Choy K.W."/>
            <person name="Wang C.C."/>
            <person name="Ogura A."/>
            <person name="Lau T.K."/>
            <person name="Rogers M.S."/>
            <person name="Ikeo K."/>
            <person name="Gojobori T."/>
            <person name="Lam D.S."/>
            <person name="Pang C.P."/>
        </authorList>
    </citation>
    <scope>NUCLEOTIDE SEQUENCE [LARGE SCALE MRNA]</scope>
    <source>
        <tissue>Eye</tissue>
    </source>
</reference>
<reference key="2">
    <citation type="journal article" date="2006" name="Nature">
        <title>DNA sequence and analysis of human chromosome 8.</title>
        <authorList>
            <person name="Nusbaum C."/>
            <person name="Mikkelsen T.S."/>
            <person name="Zody M.C."/>
            <person name="Asakawa S."/>
            <person name="Taudien S."/>
            <person name="Garber M."/>
            <person name="Kodira C.D."/>
            <person name="Schueler M.G."/>
            <person name="Shimizu A."/>
            <person name="Whittaker C.A."/>
            <person name="Chang J.L."/>
            <person name="Cuomo C.A."/>
            <person name="Dewar K."/>
            <person name="FitzGerald M.G."/>
            <person name="Yang X."/>
            <person name="Allen N.R."/>
            <person name="Anderson S."/>
            <person name="Asakawa T."/>
            <person name="Blechschmidt K."/>
            <person name="Bloom T."/>
            <person name="Borowsky M.L."/>
            <person name="Butler J."/>
            <person name="Cook A."/>
            <person name="Corum B."/>
            <person name="DeArellano K."/>
            <person name="DeCaprio D."/>
            <person name="Dooley K.T."/>
            <person name="Dorris L. III"/>
            <person name="Engels R."/>
            <person name="Gloeckner G."/>
            <person name="Hafez N."/>
            <person name="Hagopian D.S."/>
            <person name="Hall J.L."/>
            <person name="Ishikawa S.K."/>
            <person name="Jaffe D.B."/>
            <person name="Kamat A."/>
            <person name="Kudoh J."/>
            <person name="Lehmann R."/>
            <person name="Lokitsang T."/>
            <person name="Macdonald P."/>
            <person name="Major J.E."/>
            <person name="Matthews C.D."/>
            <person name="Mauceli E."/>
            <person name="Menzel U."/>
            <person name="Mihalev A.H."/>
            <person name="Minoshima S."/>
            <person name="Murayama Y."/>
            <person name="Naylor J.W."/>
            <person name="Nicol R."/>
            <person name="Nguyen C."/>
            <person name="O'Leary S.B."/>
            <person name="O'Neill K."/>
            <person name="Parker S.C.J."/>
            <person name="Polley A."/>
            <person name="Raymond C.K."/>
            <person name="Reichwald K."/>
            <person name="Rodriguez J."/>
            <person name="Sasaki T."/>
            <person name="Schilhabel M."/>
            <person name="Siddiqui R."/>
            <person name="Smith C.L."/>
            <person name="Sneddon T.P."/>
            <person name="Talamas J.A."/>
            <person name="Tenzin P."/>
            <person name="Topham K."/>
            <person name="Venkataraman V."/>
            <person name="Wen G."/>
            <person name="Yamazaki S."/>
            <person name="Young S.K."/>
            <person name="Zeng Q."/>
            <person name="Zimmer A.R."/>
            <person name="Rosenthal A."/>
            <person name="Birren B.W."/>
            <person name="Platzer M."/>
            <person name="Shimizu N."/>
            <person name="Lander E.S."/>
        </authorList>
    </citation>
    <scope>NUCLEOTIDE SEQUENCE [LARGE SCALE GENOMIC DNA]</scope>
</reference>
<gene>
    <name type="primary">C8orf88</name>
</gene>
<evidence type="ECO:0000256" key="1">
    <source>
        <dbReference type="SAM" id="MobiDB-lite"/>
    </source>
</evidence>
<feature type="chain" id="PRO_0000425157" description="Uncharacterized protein C8orf88">
    <location>
        <begin position="1"/>
        <end position="117"/>
    </location>
</feature>
<feature type="region of interest" description="Disordered" evidence="1">
    <location>
        <begin position="1"/>
        <end position="20"/>
    </location>
</feature>
<organism>
    <name type="scientific">Homo sapiens</name>
    <name type="common">Human</name>
    <dbReference type="NCBI Taxonomy" id="9606"/>
    <lineage>
        <taxon>Eukaryota</taxon>
        <taxon>Metazoa</taxon>
        <taxon>Chordata</taxon>
        <taxon>Craniata</taxon>
        <taxon>Vertebrata</taxon>
        <taxon>Euteleostomi</taxon>
        <taxon>Mammalia</taxon>
        <taxon>Eutheria</taxon>
        <taxon>Euarchontoglires</taxon>
        <taxon>Primates</taxon>
        <taxon>Haplorrhini</taxon>
        <taxon>Catarrhini</taxon>
        <taxon>Hominidae</taxon>
        <taxon>Homo</taxon>
    </lineage>
</organism>
<sequence length="117" mass="13372">METKKLIGKPLQPARPVRHLTSPPGAVFPFNFQNEYPCNTQCIQSGVSRCKTNGMQAFSQGLNEQQQQQSPVKKERIKYSRDFLLKLSSVSICRKKPDFLPDHPIVLQKPENNQSFK</sequence>
<dbReference type="EMBL" id="BY799545">
    <property type="status" value="NOT_ANNOTATED_CDS"/>
    <property type="molecule type" value="mRNA"/>
</dbReference>
<dbReference type="EMBL" id="AC087439">
    <property type="status" value="NOT_ANNOTATED_CDS"/>
    <property type="molecule type" value="Genomic_DNA"/>
</dbReference>
<dbReference type="EMBL" id="AC103770">
    <property type="status" value="NOT_ANNOTATED_CDS"/>
    <property type="molecule type" value="Genomic_DNA"/>
</dbReference>
<dbReference type="CCDS" id="CCDS59105.1"/>
<dbReference type="RefSeq" id="NP_001177901.1">
    <property type="nucleotide sequence ID" value="NM_001190972.2"/>
</dbReference>
<dbReference type="RefSeq" id="NP_001350204.1">
    <property type="nucleotide sequence ID" value="NM_001363275.2"/>
</dbReference>
<dbReference type="RefSeq" id="XP_016868428.1">
    <property type="nucleotide sequence ID" value="XM_017012939.1"/>
</dbReference>
<dbReference type="BioGRID" id="933196">
    <property type="interactions" value="1"/>
</dbReference>
<dbReference type="FunCoup" id="P0DMB2">
    <property type="interactions" value="407"/>
</dbReference>
<dbReference type="GlyGen" id="P0DMB2">
    <property type="glycosylation" value="1 site, 1 O-linked glycan (1 site)"/>
</dbReference>
<dbReference type="iPTMnet" id="P0DMB2"/>
<dbReference type="PhosphoSitePlus" id="P0DMB2"/>
<dbReference type="BioMuta" id="C8orf88"/>
<dbReference type="jPOST" id="P0DMB2"/>
<dbReference type="MassIVE" id="P0DMB2"/>
<dbReference type="PaxDb" id="9606-ENSP00000454561"/>
<dbReference type="PeptideAtlas" id="P0DMB2"/>
<dbReference type="Pumba" id="P0DMB2"/>
<dbReference type="Antibodypedia" id="73915">
    <property type="antibodies" value="3 antibodies from 3 providers"/>
</dbReference>
<dbReference type="DNASU" id="100127983"/>
<dbReference type="Ensembl" id="ENST00000517562.3">
    <property type="protein sequence ID" value="ENSP00000454561.1"/>
    <property type="gene ID" value="ENSG00000253250.3"/>
</dbReference>
<dbReference type="GeneID" id="100127983"/>
<dbReference type="KEGG" id="hsa:100127983"/>
<dbReference type="MANE-Select" id="ENST00000517562.3">
    <property type="protein sequence ID" value="ENSP00000454561.1"/>
    <property type="RefSeq nucleotide sequence ID" value="NM_001190972.2"/>
    <property type="RefSeq protein sequence ID" value="NP_001177901.1"/>
</dbReference>
<dbReference type="UCSC" id="uc022axl.2">
    <property type="organism name" value="human"/>
</dbReference>
<dbReference type="AGR" id="HGNC:44672"/>
<dbReference type="CTD" id="100127983"/>
<dbReference type="DisGeNET" id="100127983"/>
<dbReference type="GeneCards" id="C8orf88"/>
<dbReference type="HGNC" id="HGNC:44672">
    <property type="gene designation" value="C8orf88"/>
</dbReference>
<dbReference type="HPA" id="ENSG00000253250">
    <property type="expression patterns" value="Tissue enhanced (testis)"/>
</dbReference>
<dbReference type="neXtProt" id="NX_P0DMB2"/>
<dbReference type="OpenTargets" id="ENSG00000253250"/>
<dbReference type="VEuPathDB" id="HostDB:ENSG00000253250"/>
<dbReference type="eggNOG" id="ENOG502S4NM">
    <property type="taxonomic scope" value="Eukaryota"/>
</dbReference>
<dbReference type="GeneTree" id="ENSGT00530000068397"/>
<dbReference type="HOGENOM" id="CLU_1969739_0_0_1"/>
<dbReference type="InParanoid" id="P0DMB2"/>
<dbReference type="OMA" id="VGRCKTN"/>
<dbReference type="OrthoDB" id="9905203at2759"/>
<dbReference type="PAN-GO" id="P0DMB2">
    <property type="GO annotations" value="3 GO annotations based on evolutionary models"/>
</dbReference>
<dbReference type="PathwayCommons" id="P0DMB2"/>
<dbReference type="BioGRID-ORCS" id="100127983">
    <property type="hits" value="10 hits in 1021 CRISPR screens"/>
</dbReference>
<dbReference type="Pharos" id="P0DMB2">
    <property type="development level" value="Tdark"/>
</dbReference>
<dbReference type="PRO" id="PR:P0DMB2"/>
<dbReference type="Proteomes" id="UP000005640">
    <property type="component" value="Chromosome 8"/>
</dbReference>
<dbReference type="RNAct" id="P0DMB2">
    <property type="molecule type" value="protein"/>
</dbReference>
<dbReference type="Bgee" id="ENSG00000253250">
    <property type="expression patterns" value="Expressed in cauda epididymis and 170 other cell types or tissues"/>
</dbReference>
<dbReference type="GO" id="GO:0005737">
    <property type="term" value="C:cytoplasm"/>
    <property type="evidence" value="ECO:0000318"/>
    <property type="project" value="GO_Central"/>
</dbReference>
<dbReference type="GO" id="GO:0008190">
    <property type="term" value="F:eukaryotic initiation factor 4E binding"/>
    <property type="evidence" value="ECO:0000318"/>
    <property type="project" value="GO_Central"/>
</dbReference>
<dbReference type="GO" id="GO:0045947">
    <property type="term" value="P:negative regulation of translational initiation"/>
    <property type="evidence" value="ECO:0000318"/>
    <property type="project" value="GO_Central"/>
</dbReference>
<dbReference type="PANTHER" id="PTHR12669:SF15">
    <property type="entry name" value="CHROMOSOME 8 OPEN READING FRAME 88"/>
    <property type="match status" value="1"/>
</dbReference>
<dbReference type="PANTHER" id="PTHR12669">
    <property type="entry name" value="EUKARYOTIC TRANSLATION INITIATION FACTOR 4E-BINDING PROTEIN"/>
    <property type="match status" value="1"/>
</dbReference>